<gene>
    <name evidence="1" type="primary">msrA</name>
    <name type="ordered locus">gbs1569</name>
</gene>
<dbReference type="EC" id="1.8.4.11" evidence="1"/>
<dbReference type="EMBL" id="AL766852">
    <property type="protein sequence ID" value="CAD47228.1"/>
    <property type="molecule type" value="Genomic_DNA"/>
</dbReference>
<dbReference type="RefSeq" id="WP_000438902.1">
    <property type="nucleotide sequence ID" value="NC_004368.1"/>
</dbReference>
<dbReference type="SMR" id="Q8E434"/>
<dbReference type="KEGG" id="san:gbs1569"/>
<dbReference type="eggNOG" id="COG0225">
    <property type="taxonomic scope" value="Bacteria"/>
</dbReference>
<dbReference type="HOGENOM" id="CLU_031040_10_1_9"/>
<dbReference type="Proteomes" id="UP000000823">
    <property type="component" value="Chromosome"/>
</dbReference>
<dbReference type="GO" id="GO:0033744">
    <property type="term" value="F:L-methionine:thioredoxin-disulfide S-oxidoreductase activity"/>
    <property type="evidence" value="ECO:0007669"/>
    <property type="project" value="RHEA"/>
</dbReference>
<dbReference type="GO" id="GO:0008113">
    <property type="term" value="F:peptide-methionine (S)-S-oxide reductase activity"/>
    <property type="evidence" value="ECO:0007669"/>
    <property type="project" value="UniProtKB-UniRule"/>
</dbReference>
<dbReference type="GO" id="GO:0036211">
    <property type="term" value="P:protein modification process"/>
    <property type="evidence" value="ECO:0007669"/>
    <property type="project" value="UniProtKB-UniRule"/>
</dbReference>
<dbReference type="Gene3D" id="3.30.1060.10">
    <property type="entry name" value="Peptide methionine sulphoxide reductase MsrA"/>
    <property type="match status" value="1"/>
</dbReference>
<dbReference type="HAMAP" id="MF_01401">
    <property type="entry name" value="MsrA"/>
    <property type="match status" value="1"/>
</dbReference>
<dbReference type="InterPro" id="IPR002569">
    <property type="entry name" value="Met_Sox_Rdtase_MsrA_dom"/>
</dbReference>
<dbReference type="InterPro" id="IPR036509">
    <property type="entry name" value="Met_Sox_Rdtase_MsrA_sf"/>
</dbReference>
<dbReference type="NCBIfam" id="TIGR00401">
    <property type="entry name" value="msrA"/>
    <property type="match status" value="1"/>
</dbReference>
<dbReference type="PANTHER" id="PTHR43774">
    <property type="entry name" value="PEPTIDE METHIONINE SULFOXIDE REDUCTASE"/>
    <property type="match status" value="1"/>
</dbReference>
<dbReference type="PANTHER" id="PTHR43774:SF1">
    <property type="entry name" value="PEPTIDE METHIONINE SULFOXIDE REDUCTASE MSRA 2"/>
    <property type="match status" value="1"/>
</dbReference>
<dbReference type="Pfam" id="PF01625">
    <property type="entry name" value="PMSR"/>
    <property type="match status" value="1"/>
</dbReference>
<dbReference type="SUPFAM" id="SSF55068">
    <property type="entry name" value="Peptide methionine sulfoxide reductase"/>
    <property type="match status" value="1"/>
</dbReference>
<sequence length="169" mass="19509">MERAIFAGGCFWCMVQPFEELDGIESVLSGYTGGHVENPTYKEVCSKTTGHTEAVEIIFNPEKISYANLVELYWAQTDPTDAFGQFEDRGDNYRPVIFYENEEQRQIAQKSKDKLQASGRFDRPIVTSIEPADTFYPAEDYHQAFYRTNPARYALSSARRHAFLEENWH</sequence>
<reference key="1">
    <citation type="journal article" date="2002" name="Mol. Microbiol.">
        <title>Genome sequence of Streptococcus agalactiae, a pathogen causing invasive neonatal disease.</title>
        <authorList>
            <person name="Glaser P."/>
            <person name="Rusniok C."/>
            <person name="Buchrieser C."/>
            <person name="Chevalier F."/>
            <person name="Frangeul L."/>
            <person name="Msadek T."/>
            <person name="Zouine M."/>
            <person name="Couve E."/>
            <person name="Lalioui L."/>
            <person name="Poyart C."/>
            <person name="Trieu-Cuot P."/>
            <person name="Kunst F."/>
        </authorList>
    </citation>
    <scope>NUCLEOTIDE SEQUENCE [LARGE SCALE GENOMIC DNA]</scope>
    <source>
        <strain>NEM316</strain>
    </source>
</reference>
<name>MSRA_STRA3</name>
<evidence type="ECO:0000255" key="1">
    <source>
        <dbReference type="HAMAP-Rule" id="MF_01401"/>
    </source>
</evidence>
<comment type="function">
    <text evidence="1">Has an important function as a repair enzyme for proteins that have been inactivated by oxidation. Catalyzes the reversible oxidation-reduction of methionine sulfoxide in proteins to methionine.</text>
</comment>
<comment type="catalytic activity">
    <reaction evidence="1">
        <text>L-methionyl-[protein] + [thioredoxin]-disulfide + H2O = L-methionyl-(S)-S-oxide-[protein] + [thioredoxin]-dithiol</text>
        <dbReference type="Rhea" id="RHEA:14217"/>
        <dbReference type="Rhea" id="RHEA-COMP:10698"/>
        <dbReference type="Rhea" id="RHEA-COMP:10700"/>
        <dbReference type="Rhea" id="RHEA-COMP:12313"/>
        <dbReference type="Rhea" id="RHEA-COMP:12315"/>
        <dbReference type="ChEBI" id="CHEBI:15377"/>
        <dbReference type="ChEBI" id="CHEBI:16044"/>
        <dbReference type="ChEBI" id="CHEBI:29950"/>
        <dbReference type="ChEBI" id="CHEBI:44120"/>
        <dbReference type="ChEBI" id="CHEBI:50058"/>
        <dbReference type="EC" id="1.8.4.11"/>
    </reaction>
</comment>
<comment type="catalytic activity">
    <reaction evidence="1">
        <text>[thioredoxin]-disulfide + L-methionine + H2O = L-methionine (S)-S-oxide + [thioredoxin]-dithiol</text>
        <dbReference type="Rhea" id="RHEA:19993"/>
        <dbReference type="Rhea" id="RHEA-COMP:10698"/>
        <dbReference type="Rhea" id="RHEA-COMP:10700"/>
        <dbReference type="ChEBI" id="CHEBI:15377"/>
        <dbReference type="ChEBI" id="CHEBI:29950"/>
        <dbReference type="ChEBI" id="CHEBI:50058"/>
        <dbReference type="ChEBI" id="CHEBI:57844"/>
        <dbReference type="ChEBI" id="CHEBI:58772"/>
        <dbReference type="EC" id="1.8.4.11"/>
    </reaction>
</comment>
<comment type="similarity">
    <text evidence="1">Belongs to the MsrA Met sulfoxide reductase family.</text>
</comment>
<organism>
    <name type="scientific">Streptococcus agalactiae serotype III (strain NEM316)</name>
    <dbReference type="NCBI Taxonomy" id="211110"/>
    <lineage>
        <taxon>Bacteria</taxon>
        <taxon>Bacillati</taxon>
        <taxon>Bacillota</taxon>
        <taxon>Bacilli</taxon>
        <taxon>Lactobacillales</taxon>
        <taxon>Streptococcaceae</taxon>
        <taxon>Streptococcus</taxon>
    </lineage>
</organism>
<feature type="chain" id="PRO_0000138593" description="Peptide methionine sulfoxide reductase MsrA">
    <location>
        <begin position="1"/>
        <end position="169"/>
    </location>
</feature>
<feature type="active site" evidence="1">
    <location>
        <position position="10"/>
    </location>
</feature>
<keyword id="KW-0560">Oxidoreductase</keyword>
<accession>Q8E434</accession>
<protein>
    <recommendedName>
        <fullName evidence="1">Peptide methionine sulfoxide reductase MsrA</fullName>
        <shortName evidence="1">Protein-methionine-S-oxide reductase</shortName>
        <ecNumber evidence="1">1.8.4.11</ecNumber>
    </recommendedName>
    <alternativeName>
        <fullName evidence="1">Peptide-methionine (S)-S-oxide reductase</fullName>
        <shortName evidence="1">Peptide Met(O) reductase</shortName>
    </alternativeName>
</protein>
<proteinExistence type="inferred from homology"/>